<evidence type="ECO:0000255" key="1">
    <source>
        <dbReference type="HAMAP-Rule" id="MF_01221"/>
    </source>
</evidence>
<dbReference type="EMBL" id="AL935263">
    <property type="protein sequence ID" value="CCC79675.1"/>
    <property type="molecule type" value="Genomic_DNA"/>
</dbReference>
<dbReference type="RefSeq" id="WP_003642754.1">
    <property type="nucleotide sequence ID" value="NC_004567.2"/>
</dbReference>
<dbReference type="RefSeq" id="YP_004890189.1">
    <property type="nucleotide sequence ID" value="NC_004567.2"/>
</dbReference>
<dbReference type="SMR" id="Q88UH9"/>
<dbReference type="STRING" id="220668.lp_2507"/>
<dbReference type="EnsemblBacteria" id="CCC79675">
    <property type="protein sequence ID" value="CCC79675"/>
    <property type="gene ID" value="lp_2507"/>
</dbReference>
<dbReference type="KEGG" id="lpl:lp_2507"/>
<dbReference type="PATRIC" id="fig|220668.9.peg.2112"/>
<dbReference type="eggNOG" id="COG2848">
    <property type="taxonomic scope" value="Bacteria"/>
</dbReference>
<dbReference type="HOGENOM" id="CLU_048704_0_0_9"/>
<dbReference type="OrthoDB" id="9763001at2"/>
<dbReference type="PhylomeDB" id="Q88UH9"/>
<dbReference type="Proteomes" id="UP000000432">
    <property type="component" value="Chromosome"/>
</dbReference>
<dbReference type="CDD" id="cd08025">
    <property type="entry name" value="RNR_PFL_like_DUF711"/>
    <property type="match status" value="1"/>
</dbReference>
<dbReference type="Gene3D" id="3.20.70.20">
    <property type="match status" value="1"/>
</dbReference>
<dbReference type="HAMAP" id="MF_01221">
    <property type="entry name" value="UPF0210"/>
    <property type="match status" value="1"/>
</dbReference>
<dbReference type="InterPro" id="IPR007841">
    <property type="entry name" value="UPF0210"/>
</dbReference>
<dbReference type="NCBIfam" id="NF003700">
    <property type="entry name" value="PRK05313.1"/>
    <property type="match status" value="1"/>
</dbReference>
<dbReference type="PANTHER" id="PTHR37560:SF1">
    <property type="entry name" value="UPF0210 PROTEIN MJ1665"/>
    <property type="match status" value="1"/>
</dbReference>
<dbReference type="PANTHER" id="PTHR37560">
    <property type="entry name" value="UPF0210 PROTEIN SPR0218"/>
    <property type="match status" value="1"/>
</dbReference>
<dbReference type="Pfam" id="PF05167">
    <property type="entry name" value="DUF711"/>
    <property type="match status" value="1"/>
</dbReference>
<dbReference type="SUPFAM" id="SSF51998">
    <property type="entry name" value="PFL-like glycyl radical enzymes"/>
    <property type="match status" value="1"/>
</dbReference>
<comment type="subunit">
    <text evidence="1">Homodimer.</text>
</comment>
<comment type="similarity">
    <text evidence="1">Belongs to the UPF0210 family.</text>
</comment>
<gene>
    <name type="ordered locus">lp_2507</name>
</gene>
<keyword id="KW-1185">Reference proteome</keyword>
<reference key="1">
    <citation type="journal article" date="2003" name="Proc. Natl. Acad. Sci. U.S.A.">
        <title>Complete genome sequence of Lactobacillus plantarum WCFS1.</title>
        <authorList>
            <person name="Kleerebezem M."/>
            <person name="Boekhorst J."/>
            <person name="van Kranenburg R."/>
            <person name="Molenaar D."/>
            <person name="Kuipers O.P."/>
            <person name="Leer R."/>
            <person name="Tarchini R."/>
            <person name="Peters S.A."/>
            <person name="Sandbrink H.M."/>
            <person name="Fiers M.W.E.J."/>
            <person name="Stiekema W."/>
            <person name="Klein Lankhorst R.M."/>
            <person name="Bron P.A."/>
            <person name="Hoffer S.M."/>
            <person name="Nierop Groot M.N."/>
            <person name="Kerkhoven R."/>
            <person name="De Vries M."/>
            <person name="Ursing B."/>
            <person name="De Vos W.M."/>
            <person name="Siezen R.J."/>
        </authorList>
    </citation>
    <scope>NUCLEOTIDE SEQUENCE [LARGE SCALE GENOMIC DNA]</scope>
    <source>
        <strain>ATCC BAA-793 / NCIMB 8826 / WCFS1</strain>
    </source>
</reference>
<reference key="2">
    <citation type="journal article" date="2012" name="J. Bacteriol.">
        <title>Complete resequencing and reannotation of the Lactobacillus plantarum WCFS1 genome.</title>
        <authorList>
            <person name="Siezen R.J."/>
            <person name="Francke C."/>
            <person name="Renckens B."/>
            <person name="Boekhorst J."/>
            <person name="Wels M."/>
            <person name="Kleerebezem M."/>
            <person name="van Hijum S.A."/>
        </authorList>
    </citation>
    <scope>NUCLEOTIDE SEQUENCE [LARGE SCALE GENOMIC DNA]</scope>
    <scope>GENOME REANNOTATION</scope>
    <source>
        <strain>ATCC BAA-793 / NCIMB 8826 / WCFS1</strain>
    </source>
</reference>
<proteinExistence type="inferred from homology"/>
<feature type="chain" id="PRO_0000070555" description="UPF0210 protein lp_2507">
    <location>
        <begin position="1"/>
        <end position="447"/>
    </location>
</feature>
<name>Y2507_LACPL</name>
<organism>
    <name type="scientific">Lactiplantibacillus plantarum (strain ATCC BAA-793 / NCIMB 8826 / WCFS1)</name>
    <name type="common">Lactobacillus plantarum</name>
    <dbReference type="NCBI Taxonomy" id="220668"/>
    <lineage>
        <taxon>Bacteria</taxon>
        <taxon>Bacillati</taxon>
        <taxon>Bacillota</taxon>
        <taxon>Bacilli</taxon>
        <taxon>Lactobacillales</taxon>
        <taxon>Lactobacillaceae</taxon>
        <taxon>Lactiplantibacillus</taxon>
    </lineage>
</organism>
<protein>
    <recommendedName>
        <fullName evidence="1">UPF0210 protein lp_2507</fullName>
    </recommendedName>
</protein>
<accession>Q88UH9</accession>
<accession>F9UR36</accession>
<sequence length="447" mass="46590">MESRSILETIQMVAEENLDIRTITMGISLFDCVDSDGERARQKIYDKITTSAKDLVKVAAQIQEEYGIPIINKRIAVTPIALIAAASQDQDYVAYAVTMERAAQALGVDLIGGFSALVQKGYQSGDRKLIASIPAALAATSRVCSSVNVGSTRAGINLDAVGEMGRIIKQIAADDPVNCMSLVVFANAVDDNPFMAGAFHGVGEADRVINVGISGPGVVKRALEEVRGQSIDIVSEQIKKTAFKVTRMGQFVGSIASERLHVPFGIVDLSLAPTPNEGDSVAEILEEIGLESVGAPGTTAALALLNDAVKKGGVMACEHVGGLSGAFIPVSEDAEMIRAVSAGRLNIEKLEAMTAVCSVGLDMIAVPGDTSAATISGMIADEAAIGMINNKTTAVRVIPATGKGVGDAVEFGGLFGQAPVMPVNTNQPTTFIKRGGHIPAPIHSFKN</sequence>